<keyword id="KW-1015">Disulfide bond</keyword>
<keyword id="KW-0872">Ion channel impairing toxin</keyword>
<keyword id="KW-0528">Neurotoxin</keyword>
<keyword id="KW-0964">Secreted</keyword>
<keyword id="KW-0732">Signal</keyword>
<keyword id="KW-0800">Toxin</keyword>
<keyword id="KW-0738">Voltage-gated sodium channel impairing toxin</keyword>
<accession>Q9N682</accession>
<reference key="1">
    <citation type="journal article" date="2000" name="Toxicon">
        <title>Cloning and characterization of the cDNA sequences of two venom peptides from Chinese scorpion Buthus martensii Karsch (BmK).</title>
        <authorList>
            <person name="Zeng X.-C."/>
            <person name="Li W.-X."/>
            <person name="Zhu S.-Y."/>
            <person name="Peng F."/>
            <person name="Jiang D.-H."/>
            <person name="Yang F.-H."/>
            <person name="Wu K.-L."/>
        </authorList>
    </citation>
    <scope>NUCLEOTIDE SEQUENCE [MRNA]</scope>
    <source>
        <tissue>Venom gland</tissue>
    </source>
</reference>
<reference key="2">
    <citation type="journal article" date="2000" name="Toxicon">
        <title>Nine novel precursors of Buthus martensii scorpion alpha-toxin homologues.</title>
        <authorList>
            <person name="Zhu S.-Y."/>
            <person name="Li W.-X."/>
            <person name="Zeng X.-C."/>
            <person name="Liu H."/>
            <person name="Jiang D.-H."/>
            <person name="Mao X."/>
        </authorList>
    </citation>
    <scope>NUCLEOTIDE SEQUENCE [MRNA]</scope>
    <source>
        <tissue>Venom gland</tissue>
    </source>
</reference>
<reference key="3">
    <citation type="journal article" date="2012" name="Protein Expr. Purif.">
        <title>Recombinant expression, purification, and characterization of scorpion toxin BmalphaTX14.</title>
        <authorList>
            <person name="Dai H."/>
            <person name="Yin S."/>
            <person name="Li T."/>
            <person name="Cao Z."/>
            <person name="Ji Y."/>
            <person name="Wu Y."/>
            <person name="Li W."/>
        </authorList>
    </citation>
    <scope>FUNCTION</scope>
</reference>
<sequence>MNYLVMISFALLLMTGVESVRDAYIAKPENCVYHCATNEGCNKLCTDNGAESGYCQWGGKYGNACWCIKLPDDVPIRVPGKCHR</sequence>
<organism>
    <name type="scientific">Olivierus martensii</name>
    <name type="common">Manchurian scorpion</name>
    <name type="synonym">Mesobuthus martensii</name>
    <dbReference type="NCBI Taxonomy" id="34649"/>
    <lineage>
        <taxon>Eukaryota</taxon>
        <taxon>Metazoa</taxon>
        <taxon>Ecdysozoa</taxon>
        <taxon>Arthropoda</taxon>
        <taxon>Chelicerata</taxon>
        <taxon>Arachnida</taxon>
        <taxon>Scorpiones</taxon>
        <taxon>Buthida</taxon>
        <taxon>Buthoidea</taxon>
        <taxon>Buthidae</taxon>
        <taxon>Olivierus</taxon>
    </lineage>
</organism>
<feature type="signal peptide" evidence="1">
    <location>
        <begin position="1"/>
        <end position="19"/>
    </location>
</feature>
<feature type="chain" id="PRO_0000035242" description="Neurotoxin BmK-M11">
    <location>
        <begin position="20"/>
        <end position="83"/>
    </location>
</feature>
<feature type="propeptide" id="PRO_0000035243" description="Removed by a carboxypeptidase" evidence="5">
    <location>
        <position position="84"/>
    </location>
</feature>
<feature type="domain" description="LCN-type CS-alpha/beta" evidence="2">
    <location>
        <begin position="21"/>
        <end position="83"/>
    </location>
</feature>
<feature type="disulfide bond" evidence="2">
    <location>
        <begin position="31"/>
        <end position="82"/>
    </location>
</feature>
<feature type="disulfide bond" evidence="2">
    <location>
        <begin position="35"/>
        <end position="55"/>
    </location>
</feature>
<feature type="disulfide bond" evidence="2">
    <location>
        <begin position="41"/>
        <end position="65"/>
    </location>
</feature>
<feature type="disulfide bond" evidence="2">
    <location>
        <begin position="45"/>
        <end position="67"/>
    </location>
</feature>
<proteinExistence type="inferred from homology"/>
<evidence type="ECO:0000250" key="1"/>
<evidence type="ECO:0000255" key="2">
    <source>
        <dbReference type="PROSITE-ProRule" id="PRU01210"/>
    </source>
</evidence>
<evidence type="ECO:0000269" key="3">
    <source>
    </source>
</evidence>
<evidence type="ECO:0000303" key="4">
    <source>
    </source>
</evidence>
<evidence type="ECO:0000305" key="5"/>
<protein>
    <recommendedName>
        <fullName>Neurotoxin BmK-M11</fullName>
        <shortName>BmK11</shortName>
        <shortName>Bmk M11</shortName>
        <shortName>BmkM11</shortName>
    </recommendedName>
    <alternativeName>
        <fullName>Alpha-neurotoxin TX14</fullName>
        <shortName evidence="4">BmalphaTX14</shortName>
    </alternativeName>
    <alternativeName>
        <fullName>BmK M4'</fullName>
    </alternativeName>
    <alternativeName>
        <fullName>BmK-XI</fullName>
    </alternativeName>
</protein>
<comment type="function">
    <text evidence="3">Alpha toxins bind voltage-independently at site-3 of sodium channels (Nav) and inhibit the inactivation of the activated channels, thereby blocking neuronal transmission. This recombinant toxin selectively inhibits the fast inactivation of mNav1.4/SCN4A (EC(50)=82.3 nM) (tested in HEK293 cells).</text>
</comment>
<comment type="subcellular location">
    <subcellularLocation>
        <location evidence="1">Secreted</location>
    </subcellularLocation>
</comment>
<comment type="tissue specificity">
    <text evidence="5">Expressed by the venom gland.</text>
</comment>
<comment type="domain">
    <text evidence="5">Has the structural arrangement of an alpha-helix connected to antiparallel beta-sheets by disulfide bonds (CS-alpha/beta).</text>
</comment>
<comment type="miscellaneous">
    <text evidence="3">Negative results: does not inhibit rNav1.2/SCN2A (EC(50) is &gt;30000 nM) channels.</text>
</comment>
<comment type="similarity">
    <text evidence="5">Belongs to the long (4 C-C) scorpion toxin superfamily. Sodium channel inhibitor family. Alpha subfamily.</text>
</comment>
<dbReference type="EMBL" id="AF114025">
    <property type="protein sequence ID" value="AAF34872.1"/>
    <property type="molecule type" value="mRNA"/>
</dbReference>
<dbReference type="EMBL" id="AF156169">
    <property type="protein sequence ID" value="AAF29462.1"/>
    <property type="molecule type" value="mRNA"/>
</dbReference>
<dbReference type="EMBL" id="AF156595">
    <property type="protein sequence ID" value="AAK06897.1"/>
    <property type="molecule type" value="mRNA"/>
</dbReference>
<dbReference type="PIR" id="JE0143">
    <property type="entry name" value="JE0143"/>
</dbReference>
<dbReference type="SMR" id="Q9N682"/>
<dbReference type="GO" id="GO:0005576">
    <property type="term" value="C:extracellular region"/>
    <property type="evidence" value="ECO:0007669"/>
    <property type="project" value="UniProtKB-SubCell"/>
</dbReference>
<dbReference type="GO" id="GO:0019871">
    <property type="term" value="F:sodium channel inhibitor activity"/>
    <property type="evidence" value="ECO:0007669"/>
    <property type="project" value="InterPro"/>
</dbReference>
<dbReference type="GO" id="GO:0090729">
    <property type="term" value="F:toxin activity"/>
    <property type="evidence" value="ECO:0007669"/>
    <property type="project" value="UniProtKB-KW"/>
</dbReference>
<dbReference type="GO" id="GO:0006952">
    <property type="term" value="P:defense response"/>
    <property type="evidence" value="ECO:0007669"/>
    <property type="project" value="InterPro"/>
</dbReference>
<dbReference type="CDD" id="cd23106">
    <property type="entry name" value="neurotoxins_LC_scorpion"/>
    <property type="match status" value="1"/>
</dbReference>
<dbReference type="FunFam" id="3.30.30.10:FF:000002">
    <property type="entry name" value="Alpha-like toxin BmK-M1"/>
    <property type="match status" value="1"/>
</dbReference>
<dbReference type="Gene3D" id="3.30.30.10">
    <property type="entry name" value="Knottin, scorpion toxin-like"/>
    <property type="match status" value="1"/>
</dbReference>
<dbReference type="InterPro" id="IPR044062">
    <property type="entry name" value="LCN-type_CS_alpha_beta_dom"/>
</dbReference>
<dbReference type="InterPro" id="IPR003614">
    <property type="entry name" value="Scorpion_toxin-like"/>
</dbReference>
<dbReference type="InterPro" id="IPR036574">
    <property type="entry name" value="Scorpion_toxin-like_sf"/>
</dbReference>
<dbReference type="InterPro" id="IPR018218">
    <property type="entry name" value="Scorpion_toxinL"/>
</dbReference>
<dbReference type="InterPro" id="IPR002061">
    <property type="entry name" value="Scorpion_toxinL/defensin"/>
</dbReference>
<dbReference type="Pfam" id="PF00537">
    <property type="entry name" value="Toxin_3"/>
    <property type="match status" value="1"/>
</dbReference>
<dbReference type="PRINTS" id="PR00285">
    <property type="entry name" value="SCORPNTOXIN"/>
</dbReference>
<dbReference type="SMART" id="SM00505">
    <property type="entry name" value="Knot1"/>
    <property type="match status" value="1"/>
</dbReference>
<dbReference type="SUPFAM" id="SSF57095">
    <property type="entry name" value="Scorpion toxin-like"/>
    <property type="match status" value="1"/>
</dbReference>
<dbReference type="PROSITE" id="PS51863">
    <property type="entry name" value="LCN_CSAB"/>
    <property type="match status" value="1"/>
</dbReference>
<name>SCXB_OLIMR</name>